<feature type="signal peptide" evidence="2">
    <location>
        <begin position="1"/>
        <end position="18"/>
    </location>
</feature>
<feature type="chain" id="PRO_0000393159" description="Probable endo-1,4-beta-xylanase A">
    <location>
        <begin position="19"/>
        <end position="228"/>
    </location>
</feature>
<feature type="domain" description="GH11" evidence="3">
    <location>
        <begin position="40"/>
        <end position="228"/>
    </location>
</feature>
<feature type="active site" description="Nucleophile" evidence="4">
    <location>
        <position position="124"/>
    </location>
</feature>
<feature type="active site" description="Proton donor" evidence="5">
    <location>
        <position position="215"/>
    </location>
</feature>
<feature type="glycosylation site" description="N-linked (GlcNAc...) asparagine" evidence="2">
    <location>
        <position position="29"/>
    </location>
</feature>
<proteinExistence type="inferred from homology"/>
<gene>
    <name type="primary">xlnA</name>
    <name type="ORF">AFUB_048130</name>
</gene>
<name>XYNA_ASPFC</name>
<comment type="function">
    <text evidence="1">Endo-1,4-beta-xylanase involved in the hydrolysis of xylan, a major structural heterogeneous polysaccharide found in plant biomass representing the second most abundant polysaccharide in the biosphere, after cellulose.</text>
</comment>
<comment type="catalytic activity">
    <reaction>
        <text>Endohydrolysis of (1-&gt;4)-beta-D-xylosidic linkages in xylans.</text>
        <dbReference type="EC" id="3.2.1.8"/>
    </reaction>
</comment>
<comment type="pathway">
    <text>Glycan degradation; xylan degradation.</text>
</comment>
<comment type="subcellular location">
    <subcellularLocation>
        <location evidence="1">Secreted</location>
    </subcellularLocation>
</comment>
<comment type="similarity">
    <text evidence="6">Belongs to the glycosyl hydrolase 11 (cellulase G) family.</text>
</comment>
<protein>
    <recommendedName>
        <fullName>Probable endo-1,4-beta-xylanase A</fullName>
        <shortName>Xylanase A</shortName>
        <ecNumber>3.2.1.8</ecNumber>
    </recommendedName>
    <alternativeName>
        <fullName>1,4-beta-D-xylan xylanohydrolase A</fullName>
    </alternativeName>
</protein>
<organism>
    <name type="scientific">Aspergillus fumigatus (strain CBS 144.89 / FGSC A1163 / CEA10)</name>
    <name type="common">Neosartorya fumigata</name>
    <dbReference type="NCBI Taxonomy" id="451804"/>
    <lineage>
        <taxon>Eukaryota</taxon>
        <taxon>Fungi</taxon>
        <taxon>Dikarya</taxon>
        <taxon>Ascomycota</taxon>
        <taxon>Pezizomycotina</taxon>
        <taxon>Eurotiomycetes</taxon>
        <taxon>Eurotiomycetidae</taxon>
        <taxon>Eurotiales</taxon>
        <taxon>Aspergillaceae</taxon>
        <taxon>Aspergillus</taxon>
        <taxon>Aspergillus subgen. Fumigati</taxon>
    </lineage>
</organism>
<sequence length="228" mass="24494">MVSFSYLLLACSAIGALAAPVEPETTSFNETALHEFAERAGTPSSTGWNNGYYYSFWTDGGGDVTYTNGAGGSYSVNWRNVGNFVGGKGWNPGSARTINYGGSFNPSGNGYLAVYGWTTNPLIEYYVVESYGTYNPGSGGTFRGTVNTDGGTYNIYTAVRYNAPSIEGTKTFTQYWSVRTSKRTGGTVTMANHFNAWSRLGMNLGTHNYQIVATEGYQSSGSASITVY</sequence>
<accession>B0XXF3</accession>
<reference key="1">
    <citation type="journal article" date="2008" name="PLoS Genet.">
        <title>Genomic islands in the pathogenic filamentous fungus Aspergillus fumigatus.</title>
        <authorList>
            <person name="Fedorova N.D."/>
            <person name="Khaldi N."/>
            <person name="Joardar V.S."/>
            <person name="Maiti R."/>
            <person name="Amedeo P."/>
            <person name="Anderson M.J."/>
            <person name="Crabtree J."/>
            <person name="Silva J.C."/>
            <person name="Badger J.H."/>
            <person name="Albarraq A."/>
            <person name="Angiuoli S."/>
            <person name="Bussey H."/>
            <person name="Bowyer P."/>
            <person name="Cotty P.J."/>
            <person name="Dyer P.S."/>
            <person name="Egan A."/>
            <person name="Galens K."/>
            <person name="Fraser-Liggett C.M."/>
            <person name="Haas B.J."/>
            <person name="Inman J.M."/>
            <person name="Kent R."/>
            <person name="Lemieux S."/>
            <person name="Malavazi I."/>
            <person name="Orvis J."/>
            <person name="Roemer T."/>
            <person name="Ronning C.M."/>
            <person name="Sundaram J.P."/>
            <person name="Sutton G."/>
            <person name="Turner G."/>
            <person name="Venter J.C."/>
            <person name="White O.R."/>
            <person name="Whitty B.R."/>
            <person name="Youngman P."/>
            <person name="Wolfe K.H."/>
            <person name="Goldman G.H."/>
            <person name="Wortman J.R."/>
            <person name="Jiang B."/>
            <person name="Denning D.W."/>
            <person name="Nierman W.C."/>
        </authorList>
    </citation>
    <scope>NUCLEOTIDE SEQUENCE [LARGE SCALE GENOMIC DNA]</scope>
    <source>
        <strain>CBS 144.89 / FGSC A1163 / CEA10</strain>
    </source>
</reference>
<evidence type="ECO:0000250" key="1"/>
<evidence type="ECO:0000255" key="2"/>
<evidence type="ECO:0000255" key="3">
    <source>
        <dbReference type="PROSITE-ProRule" id="PRU01097"/>
    </source>
</evidence>
<evidence type="ECO:0000255" key="4">
    <source>
        <dbReference type="PROSITE-ProRule" id="PRU10062"/>
    </source>
</evidence>
<evidence type="ECO:0000255" key="5">
    <source>
        <dbReference type="PROSITE-ProRule" id="PRU10063"/>
    </source>
</evidence>
<evidence type="ECO:0000305" key="6"/>
<dbReference type="EC" id="3.2.1.8"/>
<dbReference type="EMBL" id="DS499596">
    <property type="protein sequence ID" value="EDP53627.1"/>
    <property type="molecule type" value="Genomic_DNA"/>
</dbReference>
<dbReference type="SMR" id="B0XXF3"/>
<dbReference type="GlyCosmos" id="B0XXF3">
    <property type="glycosylation" value="1 site, No reported glycans"/>
</dbReference>
<dbReference type="EnsemblFungi" id="EDP53627">
    <property type="protein sequence ID" value="EDP53627"/>
    <property type="gene ID" value="AFUB_048130"/>
</dbReference>
<dbReference type="VEuPathDB" id="FungiDB:AFUB_048130"/>
<dbReference type="HOGENOM" id="CLU_052631_0_0_1"/>
<dbReference type="OrthoDB" id="58536at5052"/>
<dbReference type="PhylomeDB" id="B0XXF3"/>
<dbReference type="UniPathway" id="UPA00114"/>
<dbReference type="Proteomes" id="UP000001699">
    <property type="component" value="Unassembled WGS sequence"/>
</dbReference>
<dbReference type="GO" id="GO:0005576">
    <property type="term" value="C:extracellular region"/>
    <property type="evidence" value="ECO:0007669"/>
    <property type="project" value="UniProtKB-SubCell"/>
</dbReference>
<dbReference type="GO" id="GO:0031176">
    <property type="term" value="F:endo-1,4-beta-xylanase activity"/>
    <property type="evidence" value="ECO:0000250"/>
    <property type="project" value="UniProtKB"/>
</dbReference>
<dbReference type="GO" id="GO:0045493">
    <property type="term" value="P:xylan catabolic process"/>
    <property type="evidence" value="ECO:0000250"/>
    <property type="project" value="UniProtKB"/>
</dbReference>
<dbReference type="FunFam" id="2.60.120.180:FF:000001">
    <property type="entry name" value="Endo-1,4-beta-xylanase"/>
    <property type="match status" value="1"/>
</dbReference>
<dbReference type="Gene3D" id="2.60.120.180">
    <property type="match status" value="1"/>
</dbReference>
<dbReference type="InterPro" id="IPR013320">
    <property type="entry name" value="ConA-like_dom_sf"/>
</dbReference>
<dbReference type="InterPro" id="IPR013319">
    <property type="entry name" value="GH11/12"/>
</dbReference>
<dbReference type="InterPro" id="IPR018208">
    <property type="entry name" value="GH11_AS_1"/>
</dbReference>
<dbReference type="InterPro" id="IPR033119">
    <property type="entry name" value="GH11_AS_2"/>
</dbReference>
<dbReference type="InterPro" id="IPR033123">
    <property type="entry name" value="GH11_dom"/>
</dbReference>
<dbReference type="InterPro" id="IPR001137">
    <property type="entry name" value="Glyco_hydro_11"/>
</dbReference>
<dbReference type="PANTHER" id="PTHR46828">
    <property type="entry name" value="ENDO-1,4-BETA-XYLANASE A-RELATED"/>
    <property type="match status" value="1"/>
</dbReference>
<dbReference type="PANTHER" id="PTHR46828:SF2">
    <property type="entry name" value="ENDO-1,4-BETA-XYLANASE A-RELATED"/>
    <property type="match status" value="1"/>
</dbReference>
<dbReference type="Pfam" id="PF00457">
    <property type="entry name" value="Glyco_hydro_11"/>
    <property type="match status" value="1"/>
</dbReference>
<dbReference type="PRINTS" id="PR00911">
    <property type="entry name" value="GLHYDRLASE11"/>
</dbReference>
<dbReference type="SUPFAM" id="SSF49899">
    <property type="entry name" value="Concanavalin A-like lectins/glucanases"/>
    <property type="match status" value="1"/>
</dbReference>
<dbReference type="PROSITE" id="PS00776">
    <property type="entry name" value="GH11_1"/>
    <property type="match status" value="1"/>
</dbReference>
<dbReference type="PROSITE" id="PS00777">
    <property type="entry name" value="GH11_2"/>
    <property type="match status" value="1"/>
</dbReference>
<dbReference type="PROSITE" id="PS51761">
    <property type="entry name" value="GH11_3"/>
    <property type="match status" value="1"/>
</dbReference>
<keyword id="KW-0119">Carbohydrate metabolism</keyword>
<keyword id="KW-0325">Glycoprotein</keyword>
<keyword id="KW-0326">Glycosidase</keyword>
<keyword id="KW-0378">Hydrolase</keyword>
<keyword id="KW-0624">Polysaccharide degradation</keyword>
<keyword id="KW-0964">Secreted</keyword>
<keyword id="KW-0732">Signal</keyword>
<keyword id="KW-0858">Xylan degradation</keyword>